<protein>
    <recommendedName>
        <fullName>Toxin AahP1005</fullName>
    </recommendedName>
    <alternativeName>
        <fullName>Neurotoxin pcD-1005</fullName>
    </alternativeName>
</protein>
<reference key="1">
    <citation type="journal article" date="2001" name="FEBS Lett.">
        <title>Evidence for a position-specific deletion as an evolutionary link between long- and short-chain scorpion toxins.</title>
        <authorList>
            <person name="Ceard B."/>
            <person name="Martin-Eauclaire M.-F."/>
            <person name="Bougis P.E."/>
        </authorList>
    </citation>
    <scope>NUCLEOTIDE SEQUENCE [MRNA]</scope>
    <source>
        <strain>Hector</strain>
    </source>
</reference>
<feature type="signal peptide" evidence="1">
    <location>
        <begin position="1"/>
        <end position="19"/>
    </location>
</feature>
<feature type="chain" id="PRO_0000035225" description="Toxin AahP1005">
    <location>
        <begin position="20"/>
        <end position="83"/>
    </location>
</feature>
<feature type="domain" description="LCN-type CS-alpha/beta" evidence="2">
    <location>
        <begin position="21"/>
        <end position="83"/>
    </location>
</feature>
<feature type="modified residue" description="Asparagine amide" evidence="1">
    <location>
        <position position="83"/>
    </location>
</feature>
<feature type="disulfide bond" evidence="2">
    <location>
        <begin position="31"/>
        <end position="82"/>
    </location>
</feature>
<feature type="disulfide bond" evidence="2">
    <location>
        <begin position="35"/>
        <end position="55"/>
    </location>
</feature>
<feature type="disulfide bond" evidence="2">
    <location>
        <begin position="41"/>
        <end position="65"/>
    </location>
</feature>
<feature type="disulfide bond" evidence="2">
    <location>
        <begin position="45"/>
        <end position="67"/>
    </location>
</feature>
<accession>Q9BLM4</accession>
<keyword id="KW-0027">Amidation</keyword>
<keyword id="KW-1015">Disulfide bond</keyword>
<keyword id="KW-0872">Ion channel impairing toxin</keyword>
<keyword id="KW-0528">Neurotoxin</keyword>
<keyword id="KW-0964">Secreted</keyword>
<keyword id="KW-0732">Signal</keyword>
<keyword id="KW-0800">Toxin</keyword>
<keyword id="KW-0738">Voltage-gated sodium channel impairing toxin</keyword>
<sequence length="85" mass="9523">MNYLVMISLALLFMTGVESKKDGYIVDDKNCTFFCGRNAYCNDECKKKGAESGYCQWASPYGNACYCYKLPDRVSTKKKGGCNGR</sequence>
<comment type="function">
    <text evidence="1">Alpha toxins bind voltage-independently at site-3 of sodium channels (Nav) and inhibit the inactivation of the activated channels, thereby blocking neuronal transmission.</text>
</comment>
<comment type="subcellular location">
    <subcellularLocation>
        <location>Secreted</location>
    </subcellularLocation>
</comment>
<comment type="tissue specificity">
    <text>Expressed by the venom gland.</text>
</comment>
<comment type="domain">
    <text evidence="3">Has the structural arrangement of an alpha-helix connected to antiparallel beta-sheets by disulfide bonds (CS-alpha/beta).</text>
</comment>
<comment type="similarity">
    <text evidence="3">Belongs to the long (4 C-C) scorpion toxin superfamily. Sodium channel inhibitor family. Alpha subfamily.</text>
</comment>
<dbReference type="EMBL" id="AJ308440">
    <property type="protein sequence ID" value="CAC37321.1"/>
    <property type="molecule type" value="mRNA"/>
</dbReference>
<dbReference type="SMR" id="Q9BLM4"/>
<dbReference type="GO" id="GO:0005576">
    <property type="term" value="C:extracellular region"/>
    <property type="evidence" value="ECO:0007669"/>
    <property type="project" value="UniProtKB-SubCell"/>
</dbReference>
<dbReference type="GO" id="GO:0019871">
    <property type="term" value="F:sodium channel inhibitor activity"/>
    <property type="evidence" value="ECO:0007669"/>
    <property type="project" value="InterPro"/>
</dbReference>
<dbReference type="GO" id="GO:0090729">
    <property type="term" value="F:toxin activity"/>
    <property type="evidence" value="ECO:0007669"/>
    <property type="project" value="UniProtKB-KW"/>
</dbReference>
<dbReference type="GO" id="GO:0006952">
    <property type="term" value="P:defense response"/>
    <property type="evidence" value="ECO:0007669"/>
    <property type="project" value="InterPro"/>
</dbReference>
<dbReference type="CDD" id="cd23106">
    <property type="entry name" value="neurotoxins_LC_scorpion"/>
    <property type="match status" value="1"/>
</dbReference>
<dbReference type="Gene3D" id="3.30.30.10">
    <property type="entry name" value="Knottin, scorpion toxin-like"/>
    <property type="match status" value="1"/>
</dbReference>
<dbReference type="InterPro" id="IPR044062">
    <property type="entry name" value="LCN-type_CS_alpha_beta_dom"/>
</dbReference>
<dbReference type="InterPro" id="IPR003614">
    <property type="entry name" value="Scorpion_toxin-like"/>
</dbReference>
<dbReference type="InterPro" id="IPR036574">
    <property type="entry name" value="Scorpion_toxin-like_sf"/>
</dbReference>
<dbReference type="InterPro" id="IPR018218">
    <property type="entry name" value="Scorpion_toxinL"/>
</dbReference>
<dbReference type="InterPro" id="IPR002061">
    <property type="entry name" value="Scorpion_toxinL/defensin"/>
</dbReference>
<dbReference type="Pfam" id="PF00537">
    <property type="entry name" value="Toxin_3"/>
    <property type="match status" value="1"/>
</dbReference>
<dbReference type="PRINTS" id="PR00285">
    <property type="entry name" value="SCORPNTOXIN"/>
</dbReference>
<dbReference type="PRINTS" id="PR00284">
    <property type="entry name" value="TOXIN"/>
</dbReference>
<dbReference type="SMART" id="SM00505">
    <property type="entry name" value="Knot1"/>
    <property type="match status" value="1"/>
</dbReference>
<dbReference type="SUPFAM" id="SSF57095">
    <property type="entry name" value="Scorpion toxin-like"/>
    <property type="match status" value="1"/>
</dbReference>
<dbReference type="PROSITE" id="PS51863">
    <property type="entry name" value="LCN_CSAB"/>
    <property type="match status" value="1"/>
</dbReference>
<evidence type="ECO:0000250" key="1"/>
<evidence type="ECO:0000255" key="2">
    <source>
        <dbReference type="PROSITE-ProRule" id="PRU01210"/>
    </source>
</evidence>
<evidence type="ECO:0000305" key="3"/>
<organism>
    <name type="scientific">Androctonus australis</name>
    <name type="common">Sahara scorpion</name>
    <dbReference type="NCBI Taxonomy" id="6858"/>
    <lineage>
        <taxon>Eukaryota</taxon>
        <taxon>Metazoa</taxon>
        <taxon>Ecdysozoa</taxon>
        <taxon>Arthropoda</taxon>
        <taxon>Chelicerata</taxon>
        <taxon>Arachnida</taxon>
        <taxon>Scorpiones</taxon>
        <taxon>Buthida</taxon>
        <taxon>Buthoidea</taxon>
        <taxon>Buthidae</taxon>
        <taxon>Androctonus</taxon>
    </lineage>
</organism>
<name>SCXA_ANDAU</name>
<proteinExistence type="evidence at transcript level"/>